<organism>
    <name type="scientific">Helicobacter acinonychis (strain Sheeba)</name>
    <dbReference type="NCBI Taxonomy" id="382638"/>
    <lineage>
        <taxon>Bacteria</taxon>
        <taxon>Pseudomonadati</taxon>
        <taxon>Campylobacterota</taxon>
        <taxon>Epsilonproteobacteria</taxon>
        <taxon>Campylobacterales</taxon>
        <taxon>Helicobacteraceae</taxon>
        <taxon>Helicobacter</taxon>
    </lineage>
</organism>
<gene>
    <name evidence="1" type="primary">nuoI</name>
    <name type="ordered locus">Hac_0216</name>
</gene>
<sequence>MAKQEYKQLPKRAEIHSATEQFKDTIKTSLGLDLFKGLGLTIKEFFSPSVTIHYPMEQLPLSPRYRAVHNLQRLLDSGSERCIGCGLCEKICTSNCIRIITHKGEDNRKKIDSYTINLGRCIYCGLCAEVCPELAIVMGNRFENASTQRSQYGSKSEFLTSEQDAKDCSHAEFLGFGFVSPNYNERMQATPLDYVQEPSKEESKKETPTSPEANKGDENV</sequence>
<comment type="function">
    <text evidence="1">NDH-1 shuttles electrons from NADH, via FMN and iron-sulfur (Fe-S) centers, to quinones in the respiratory chain. The immediate electron acceptor for the enzyme in this species is believed to be ubiquinone. Couples the redox reaction to proton translocation (for every two electrons transferred, four hydrogen ions are translocated across the cytoplasmic membrane), and thus conserves the redox energy in a proton gradient.</text>
</comment>
<comment type="catalytic activity">
    <reaction evidence="1">
        <text>a quinone + NADH + 5 H(+)(in) = a quinol + NAD(+) + 4 H(+)(out)</text>
        <dbReference type="Rhea" id="RHEA:57888"/>
        <dbReference type="ChEBI" id="CHEBI:15378"/>
        <dbReference type="ChEBI" id="CHEBI:24646"/>
        <dbReference type="ChEBI" id="CHEBI:57540"/>
        <dbReference type="ChEBI" id="CHEBI:57945"/>
        <dbReference type="ChEBI" id="CHEBI:132124"/>
    </reaction>
</comment>
<comment type="cofactor">
    <cofactor evidence="1">
        <name>[4Fe-4S] cluster</name>
        <dbReference type="ChEBI" id="CHEBI:49883"/>
    </cofactor>
    <text evidence="1">Binds 2 [4Fe-4S] clusters per subunit.</text>
</comment>
<comment type="subunit">
    <text evidence="1">NDH-1 is composed of 14 different subunits. Subunits NuoA, H, J, K, L, M, N constitute the membrane sector of the complex.</text>
</comment>
<comment type="subcellular location">
    <subcellularLocation>
        <location evidence="1">Cell inner membrane</location>
        <topology evidence="1">Peripheral membrane protein</topology>
    </subcellularLocation>
</comment>
<comment type="similarity">
    <text evidence="1">Belongs to the complex I 23 kDa subunit family.</text>
</comment>
<protein>
    <recommendedName>
        <fullName evidence="1">NADH-quinone oxidoreductase subunit I</fullName>
        <ecNumber evidence="1">7.1.1.-</ecNumber>
    </recommendedName>
    <alternativeName>
        <fullName evidence="1">NADH dehydrogenase I subunit I</fullName>
    </alternativeName>
    <alternativeName>
        <fullName evidence="1">NDH-1 subunit I</fullName>
    </alternativeName>
</protein>
<proteinExistence type="inferred from homology"/>
<keyword id="KW-0004">4Fe-4S</keyword>
<keyword id="KW-0997">Cell inner membrane</keyword>
<keyword id="KW-1003">Cell membrane</keyword>
<keyword id="KW-0408">Iron</keyword>
<keyword id="KW-0411">Iron-sulfur</keyword>
<keyword id="KW-0472">Membrane</keyword>
<keyword id="KW-0479">Metal-binding</keyword>
<keyword id="KW-0520">NAD</keyword>
<keyword id="KW-0874">Quinone</keyword>
<keyword id="KW-0677">Repeat</keyword>
<keyword id="KW-1278">Translocase</keyword>
<keyword id="KW-0830">Ubiquinone</keyword>
<reference key="1">
    <citation type="journal article" date="2006" name="PLoS Genet.">
        <title>Who ate whom? Adaptive Helicobacter genomic changes that accompanied a host jump from early humans to large felines.</title>
        <authorList>
            <person name="Eppinger M."/>
            <person name="Baar C."/>
            <person name="Linz B."/>
            <person name="Raddatz G."/>
            <person name="Lanz C."/>
            <person name="Keller H."/>
            <person name="Morelli G."/>
            <person name="Gressmann H."/>
            <person name="Achtman M."/>
            <person name="Schuster S.C."/>
        </authorList>
    </citation>
    <scope>NUCLEOTIDE SEQUENCE [LARGE SCALE GENOMIC DNA]</scope>
    <source>
        <strain>Sheeba</strain>
    </source>
</reference>
<evidence type="ECO:0000255" key="1">
    <source>
        <dbReference type="HAMAP-Rule" id="MF_01351"/>
    </source>
</evidence>
<evidence type="ECO:0000256" key="2">
    <source>
        <dbReference type="SAM" id="MobiDB-lite"/>
    </source>
</evidence>
<feature type="chain" id="PRO_0000298502" description="NADH-quinone oxidoreductase subunit I">
    <location>
        <begin position="1"/>
        <end position="220"/>
    </location>
</feature>
<feature type="domain" description="4Fe-4S ferredoxin-type 1" evidence="1">
    <location>
        <begin position="71"/>
        <end position="102"/>
    </location>
</feature>
<feature type="domain" description="4Fe-4S ferredoxin-type 2" evidence="1">
    <location>
        <begin position="112"/>
        <end position="141"/>
    </location>
</feature>
<feature type="region of interest" description="Disordered" evidence="2">
    <location>
        <begin position="189"/>
        <end position="220"/>
    </location>
</feature>
<feature type="compositionally biased region" description="Basic and acidic residues" evidence="2">
    <location>
        <begin position="198"/>
        <end position="207"/>
    </location>
</feature>
<feature type="binding site" evidence="1">
    <location>
        <position position="82"/>
    </location>
    <ligand>
        <name>[4Fe-4S] cluster</name>
        <dbReference type="ChEBI" id="CHEBI:49883"/>
        <label>1</label>
    </ligand>
</feature>
<feature type="binding site" evidence="1">
    <location>
        <position position="85"/>
    </location>
    <ligand>
        <name>[4Fe-4S] cluster</name>
        <dbReference type="ChEBI" id="CHEBI:49883"/>
        <label>1</label>
    </ligand>
</feature>
<feature type="binding site" evidence="1">
    <location>
        <position position="88"/>
    </location>
    <ligand>
        <name>[4Fe-4S] cluster</name>
        <dbReference type="ChEBI" id="CHEBI:49883"/>
        <label>1</label>
    </ligand>
</feature>
<feature type="binding site" evidence="1">
    <location>
        <position position="92"/>
    </location>
    <ligand>
        <name>[4Fe-4S] cluster</name>
        <dbReference type="ChEBI" id="CHEBI:49883"/>
        <label>2</label>
    </ligand>
</feature>
<feature type="binding site" evidence="1">
    <location>
        <position position="121"/>
    </location>
    <ligand>
        <name>[4Fe-4S] cluster</name>
        <dbReference type="ChEBI" id="CHEBI:49883"/>
        <label>2</label>
    </ligand>
</feature>
<feature type="binding site" evidence="1">
    <location>
        <position position="124"/>
    </location>
    <ligand>
        <name>[4Fe-4S] cluster</name>
        <dbReference type="ChEBI" id="CHEBI:49883"/>
        <label>2</label>
    </ligand>
</feature>
<feature type="binding site" evidence="1">
    <location>
        <position position="127"/>
    </location>
    <ligand>
        <name>[4Fe-4S] cluster</name>
        <dbReference type="ChEBI" id="CHEBI:49883"/>
        <label>2</label>
    </ligand>
</feature>
<feature type="binding site" evidence="1">
    <location>
        <position position="131"/>
    </location>
    <ligand>
        <name>[4Fe-4S] cluster</name>
        <dbReference type="ChEBI" id="CHEBI:49883"/>
        <label>1</label>
    </ligand>
</feature>
<name>NUOI_HELAH</name>
<dbReference type="EC" id="7.1.1.-" evidence="1"/>
<dbReference type="EMBL" id="AM260522">
    <property type="protein sequence ID" value="CAJ99066.1"/>
    <property type="molecule type" value="Genomic_DNA"/>
</dbReference>
<dbReference type="RefSeq" id="WP_011577182.1">
    <property type="nucleotide sequence ID" value="NC_008229.1"/>
</dbReference>
<dbReference type="SMR" id="Q17Z60"/>
<dbReference type="STRING" id="382638.Hac_0216"/>
<dbReference type="GeneID" id="31757739"/>
<dbReference type="KEGG" id="hac:Hac_0216"/>
<dbReference type="eggNOG" id="COG1143">
    <property type="taxonomic scope" value="Bacteria"/>
</dbReference>
<dbReference type="HOGENOM" id="CLU_067218_4_1_7"/>
<dbReference type="OrthoDB" id="9808559at2"/>
<dbReference type="BioCyc" id="HACI382638:HAC_RS00965-MONOMER"/>
<dbReference type="Proteomes" id="UP000000775">
    <property type="component" value="Chromosome"/>
</dbReference>
<dbReference type="GO" id="GO:0005886">
    <property type="term" value="C:plasma membrane"/>
    <property type="evidence" value="ECO:0007669"/>
    <property type="project" value="UniProtKB-SubCell"/>
</dbReference>
<dbReference type="GO" id="GO:0051539">
    <property type="term" value="F:4 iron, 4 sulfur cluster binding"/>
    <property type="evidence" value="ECO:0007669"/>
    <property type="project" value="UniProtKB-KW"/>
</dbReference>
<dbReference type="GO" id="GO:0005506">
    <property type="term" value="F:iron ion binding"/>
    <property type="evidence" value="ECO:0007669"/>
    <property type="project" value="UniProtKB-UniRule"/>
</dbReference>
<dbReference type="GO" id="GO:0050136">
    <property type="term" value="F:NADH:ubiquinone reductase (non-electrogenic) activity"/>
    <property type="evidence" value="ECO:0007669"/>
    <property type="project" value="UniProtKB-UniRule"/>
</dbReference>
<dbReference type="GO" id="GO:0048038">
    <property type="term" value="F:quinone binding"/>
    <property type="evidence" value="ECO:0007669"/>
    <property type="project" value="UniProtKB-KW"/>
</dbReference>
<dbReference type="GO" id="GO:0009060">
    <property type="term" value="P:aerobic respiration"/>
    <property type="evidence" value="ECO:0007669"/>
    <property type="project" value="TreeGrafter"/>
</dbReference>
<dbReference type="Gene3D" id="3.30.70.3270">
    <property type="match status" value="1"/>
</dbReference>
<dbReference type="HAMAP" id="MF_01351">
    <property type="entry name" value="NDH1_NuoI"/>
    <property type="match status" value="1"/>
</dbReference>
<dbReference type="InterPro" id="IPR017896">
    <property type="entry name" value="4Fe4S_Fe-S-bd"/>
</dbReference>
<dbReference type="InterPro" id="IPR017900">
    <property type="entry name" value="4Fe4S_Fe_S_CS"/>
</dbReference>
<dbReference type="InterPro" id="IPR010226">
    <property type="entry name" value="NADH_quinone_OxRdtase_chainI"/>
</dbReference>
<dbReference type="NCBIfam" id="TIGR01971">
    <property type="entry name" value="NuoI"/>
    <property type="match status" value="1"/>
</dbReference>
<dbReference type="NCBIfam" id="NF004542">
    <property type="entry name" value="PRK05888.2-3"/>
    <property type="match status" value="1"/>
</dbReference>
<dbReference type="NCBIfam" id="NF004544">
    <property type="entry name" value="PRK05888.2-6"/>
    <property type="match status" value="1"/>
</dbReference>
<dbReference type="PANTHER" id="PTHR10849:SF20">
    <property type="entry name" value="NADH DEHYDROGENASE [UBIQUINONE] IRON-SULFUR PROTEIN 8, MITOCHONDRIAL"/>
    <property type="match status" value="1"/>
</dbReference>
<dbReference type="PANTHER" id="PTHR10849">
    <property type="entry name" value="NADH DEHYDROGENASE UBIQUINONE IRON-SULFUR PROTEIN 8, MITOCHONDRIAL"/>
    <property type="match status" value="1"/>
</dbReference>
<dbReference type="Pfam" id="PF12838">
    <property type="entry name" value="Fer4_7"/>
    <property type="match status" value="1"/>
</dbReference>
<dbReference type="SUPFAM" id="SSF46548">
    <property type="entry name" value="alpha-helical ferredoxin"/>
    <property type="match status" value="1"/>
</dbReference>
<dbReference type="PROSITE" id="PS00198">
    <property type="entry name" value="4FE4S_FER_1"/>
    <property type="match status" value="1"/>
</dbReference>
<dbReference type="PROSITE" id="PS51379">
    <property type="entry name" value="4FE4S_FER_2"/>
    <property type="match status" value="2"/>
</dbReference>
<accession>Q17Z60</accession>